<sequence length="471" mass="51958">MKEYQTITEVSGPLVYVETDEPIGYDEIVEIETPNGDVKRGQVLESSDGFVAIQVFEGTEGVGKDASVRFLGETLKMPVTEDLLGRVLDGSGNPIDGGPDIVPDDRVDIVGEAINPHAREYPEEFIQTGVSGIDGMNTLVRGQKLPIFSGSGLPHSDLALQIARQASVPEEEAETDDDEGSEFAVVFGAMGITAEEANEFMDDFERTGALERSVVFMNLADDPAVERTVTPRMALTTAEYLAFEKDYHVLVILTDMTNYCEALRQIGAAREEVPGRRGYPGYMYTDLAQLYERAGRIEGKEGSVTQIPILTMPGDDDTHPIPDLTGYITEGQIMMNRDLNSQGVTPPVNVLPSLSRLMDDGIGEGLTRADHGDVSDQLYAAYAEGEELRDLVNIVGREALSERDNRYLDFADRFEAEFIDQGFKTNRDIEETLDLGWELLSMFPKTELNRVDEDLIEDHYVEDVADEATAD</sequence>
<comment type="function">
    <text evidence="1">Component of the A-type ATP synthase that produces ATP from ADP in the presence of a proton gradient across the membrane. The B chain is a regulatory subunit.</text>
</comment>
<comment type="subunit">
    <text evidence="1">Has multiple subunits with at least A(3), B(3), C, D, E, F, H, I and proteolipid K(x).</text>
</comment>
<comment type="subcellular location">
    <subcellularLocation>
        <location evidence="1">Cell membrane</location>
        <topology evidence="1">Peripheral membrane protein</topology>
    </subcellularLocation>
</comment>
<comment type="similarity">
    <text evidence="1">Belongs to the ATPase alpha/beta chains family.</text>
</comment>
<protein>
    <recommendedName>
        <fullName evidence="1">A-type ATP synthase subunit B</fullName>
    </recommendedName>
</protein>
<dbReference type="EMBL" id="AM774415">
    <property type="protein sequence ID" value="CAP14573.1"/>
    <property type="molecule type" value="Genomic_DNA"/>
</dbReference>
<dbReference type="RefSeq" id="WP_010903578.1">
    <property type="nucleotide sequence ID" value="NC_010364.1"/>
</dbReference>
<dbReference type="SMR" id="B0R754"/>
<dbReference type="EnsemblBacteria" id="CAP14573">
    <property type="protein sequence ID" value="CAP14573"/>
    <property type="gene ID" value="OE_3984R"/>
</dbReference>
<dbReference type="KEGG" id="hsl:OE_3984R"/>
<dbReference type="HOGENOM" id="CLU_022916_0_0_2"/>
<dbReference type="PhylomeDB" id="B0R754"/>
<dbReference type="Proteomes" id="UP000001321">
    <property type="component" value="Chromosome"/>
</dbReference>
<dbReference type="GO" id="GO:0005886">
    <property type="term" value="C:plasma membrane"/>
    <property type="evidence" value="ECO:0007669"/>
    <property type="project" value="UniProtKB-SubCell"/>
</dbReference>
<dbReference type="GO" id="GO:0033178">
    <property type="term" value="C:proton-transporting two-sector ATPase complex, catalytic domain"/>
    <property type="evidence" value="ECO:0007669"/>
    <property type="project" value="InterPro"/>
</dbReference>
<dbReference type="GO" id="GO:0005524">
    <property type="term" value="F:ATP binding"/>
    <property type="evidence" value="ECO:0007669"/>
    <property type="project" value="UniProtKB-UniRule"/>
</dbReference>
<dbReference type="GO" id="GO:0046933">
    <property type="term" value="F:proton-transporting ATP synthase activity, rotational mechanism"/>
    <property type="evidence" value="ECO:0007669"/>
    <property type="project" value="UniProtKB-UniRule"/>
</dbReference>
<dbReference type="GO" id="GO:0042777">
    <property type="term" value="P:proton motive force-driven plasma membrane ATP synthesis"/>
    <property type="evidence" value="ECO:0007669"/>
    <property type="project" value="UniProtKB-UniRule"/>
</dbReference>
<dbReference type="CDD" id="cd18112">
    <property type="entry name" value="ATP-synt_V_A-type_beta_C"/>
    <property type="match status" value="1"/>
</dbReference>
<dbReference type="CDD" id="cd18118">
    <property type="entry name" value="ATP-synt_V_A-type_beta_N"/>
    <property type="match status" value="1"/>
</dbReference>
<dbReference type="CDD" id="cd01135">
    <property type="entry name" value="V_A-ATPase_B"/>
    <property type="match status" value="1"/>
</dbReference>
<dbReference type="Gene3D" id="3.40.50.12240">
    <property type="match status" value="1"/>
</dbReference>
<dbReference type="HAMAP" id="MF_00310">
    <property type="entry name" value="ATP_synth_B_arch"/>
    <property type="match status" value="1"/>
</dbReference>
<dbReference type="InterPro" id="IPR055190">
    <property type="entry name" value="ATP-synt_VA_C"/>
</dbReference>
<dbReference type="InterPro" id="IPR020003">
    <property type="entry name" value="ATPase_a/bsu_AS"/>
</dbReference>
<dbReference type="InterPro" id="IPR005724">
    <property type="entry name" value="ATPase_A1-cplx_bsu"/>
</dbReference>
<dbReference type="InterPro" id="IPR004100">
    <property type="entry name" value="ATPase_F1/V1/A1_a/bsu_N"/>
</dbReference>
<dbReference type="InterPro" id="IPR000194">
    <property type="entry name" value="ATPase_F1/V1/A1_a/bsu_nucl-bd"/>
</dbReference>
<dbReference type="InterPro" id="IPR027417">
    <property type="entry name" value="P-loop_NTPase"/>
</dbReference>
<dbReference type="InterPro" id="IPR022879">
    <property type="entry name" value="V-ATPase_su_B/beta"/>
</dbReference>
<dbReference type="NCBIfam" id="TIGR01041">
    <property type="entry name" value="ATP_syn_B_arch"/>
    <property type="match status" value="1"/>
</dbReference>
<dbReference type="NCBIfam" id="NF003235">
    <property type="entry name" value="PRK04196.1"/>
    <property type="match status" value="1"/>
</dbReference>
<dbReference type="PANTHER" id="PTHR43389">
    <property type="entry name" value="V-TYPE PROTON ATPASE SUBUNIT B"/>
    <property type="match status" value="1"/>
</dbReference>
<dbReference type="PANTHER" id="PTHR43389:SF4">
    <property type="entry name" value="V-TYPE PROTON ATPASE SUBUNIT B"/>
    <property type="match status" value="1"/>
</dbReference>
<dbReference type="Pfam" id="PF00006">
    <property type="entry name" value="ATP-synt_ab"/>
    <property type="match status" value="1"/>
</dbReference>
<dbReference type="Pfam" id="PF02874">
    <property type="entry name" value="ATP-synt_ab_N"/>
    <property type="match status" value="1"/>
</dbReference>
<dbReference type="Pfam" id="PF22919">
    <property type="entry name" value="ATP-synt_VA_C"/>
    <property type="match status" value="1"/>
</dbReference>
<dbReference type="PIRSF" id="PIRSF039114">
    <property type="entry name" value="V-ATPsynth_beta/V-ATPase_B"/>
    <property type="match status" value="1"/>
</dbReference>
<dbReference type="SUPFAM" id="SSF47917">
    <property type="entry name" value="C-terminal domain of alpha and beta subunits of F1 ATP synthase"/>
    <property type="match status" value="1"/>
</dbReference>
<dbReference type="SUPFAM" id="SSF52540">
    <property type="entry name" value="P-loop containing nucleoside triphosphate hydrolases"/>
    <property type="match status" value="1"/>
</dbReference>
<dbReference type="PROSITE" id="PS00152">
    <property type="entry name" value="ATPASE_ALPHA_BETA"/>
    <property type="match status" value="1"/>
</dbReference>
<organism>
    <name type="scientific">Halobacterium salinarum (strain ATCC 29341 / DSM 671 / R1)</name>
    <dbReference type="NCBI Taxonomy" id="478009"/>
    <lineage>
        <taxon>Archaea</taxon>
        <taxon>Methanobacteriati</taxon>
        <taxon>Methanobacteriota</taxon>
        <taxon>Stenosarchaea group</taxon>
        <taxon>Halobacteria</taxon>
        <taxon>Halobacteriales</taxon>
        <taxon>Halobacteriaceae</taxon>
        <taxon>Halobacterium</taxon>
        <taxon>Halobacterium salinarum NRC-34001</taxon>
    </lineage>
</organism>
<reference key="1">
    <citation type="journal article" date="2008" name="Genomics">
        <title>Evolution in the laboratory: the genome of Halobacterium salinarum strain R1 compared to that of strain NRC-1.</title>
        <authorList>
            <person name="Pfeiffer F."/>
            <person name="Schuster S.C."/>
            <person name="Broicher A."/>
            <person name="Falb M."/>
            <person name="Palm P."/>
            <person name="Rodewald K."/>
            <person name="Ruepp A."/>
            <person name="Soppa J."/>
            <person name="Tittor J."/>
            <person name="Oesterhelt D."/>
        </authorList>
    </citation>
    <scope>NUCLEOTIDE SEQUENCE [LARGE SCALE GENOMIC DNA]</scope>
    <source>
        <strain>ATCC 29341 / DSM 671 / R1</strain>
    </source>
</reference>
<accession>B0R754</accession>
<proteinExistence type="inferred from homology"/>
<evidence type="ECO:0000255" key="1">
    <source>
        <dbReference type="HAMAP-Rule" id="MF_00310"/>
    </source>
</evidence>
<gene>
    <name evidence="1" type="primary">atpB</name>
    <name type="ordered locus">OE_3984R</name>
</gene>
<feature type="chain" id="PRO_1000115660" description="A-type ATP synthase subunit B">
    <location>
        <begin position="1"/>
        <end position="471"/>
    </location>
</feature>
<name>AATB_HALS3</name>
<keyword id="KW-0066">ATP synthesis</keyword>
<keyword id="KW-1003">Cell membrane</keyword>
<keyword id="KW-0375">Hydrogen ion transport</keyword>
<keyword id="KW-0406">Ion transport</keyword>
<keyword id="KW-0472">Membrane</keyword>
<keyword id="KW-0813">Transport</keyword>